<reference key="1">
    <citation type="submission" date="2006-10" db="EMBL/GenBank/DDBJ databases">
        <authorList>
            <person name="Fleischmann R.D."/>
            <person name="Dodson R.J."/>
            <person name="Haft D.H."/>
            <person name="Merkel J.S."/>
            <person name="Nelson W.C."/>
            <person name="Fraser C.M."/>
        </authorList>
    </citation>
    <scope>NUCLEOTIDE SEQUENCE [LARGE SCALE GENOMIC DNA]</scope>
    <source>
        <strain>104</strain>
    </source>
</reference>
<name>LSPA_MYCA1</name>
<dbReference type="EC" id="3.4.23.36" evidence="1"/>
<dbReference type="EMBL" id="CP000479">
    <property type="protein sequence ID" value="ABK69194.1"/>
    <property type="molecule type" value="Genomic_DNA"/>
</dbReference>
<dbReference type="SMR" id="A0QHM5"/>
<dbReference type="KEGG" id="mav:MAV_3231"/>
<dbReference type="HOGENOM" id="CLU_083252_2_2_11"/>
<dbReference type="UniPathway" id="UPA00665"/>
<dbReference type="Proteomes" id="UP000001574">
    <property type="component" value="Chromosome"/>
</dbReference>
<dbReference type="GO" id="GO:0005886">
    <property type="term" value="C:plasma membrane"/>
    <property type="evidence" value="ECO:0007669"/>
    <property type="project" value="UniProtKB-SubCell"/>
</dbReference>
<dbReference type="GO" id="GO:0004190">
    <property type="term" value="F:aspartic-type endopeptidase activity"/>
    <property type="evidence" value="ECO:0007669"/>
    <property type="project" value="UniProtKB-UniRule"/>
</dbReference>
<dbReference type="GO" id="GO:0006508">
    <property type="term" value="P:proteolysis"/>
    <property type="evidence" value="ECO:0007669"/>
    <property type="project" value="UniProtKB-KW"/>
</dbReference>
<dbReference type="HAMAP" id="MF_00161">
    <property type="entry name" value="LspA"/>
    <property type="match status" value="1"/>
</dbReference>
<dbReference type="InterPro" id="IPR001872">
    <property type="entry name" value="Peptidase_A8"/>
</dbReference>
<dbReference type="NCBIfam" id="TIGR00077">
    <property type="entry name" value="lspA"/>
    <property type="match status" value="1"/>
</dbReference>
<dbReference type="PANTHER" id="PTHR33695">
    <property type="entry name" value="LIPOPROTEIN SIGNAL PEPTIDASE"/>
    <property type="match status" value="1"/>
</dbReference>
<dbReference type="PANTHER" id="PTHR33695:SF1">
    <property type="entry name" value="LIPOPROTEIN SIGNAL PEPTIDASE"/>
    <property type="match status" value="1"/>
</dbReference>
<dbReference type="Pfam" id="PF01252">
    <property type="entry name" value="Peptidase_A8"/>
    <property type="match status" value="1"/>
</dbReference>
<dbReference type="PRINTS" id="PR00781">
    <property type="entry name" value="LIPOSIGPTASE"/>
</dbReference>
<dbReference type="PROSITE" id="PS00855">
    <property type="entry name" value="SPASE_II"/>
    <property type="match status" value="1"/>
</dbReference>
<keyword id="KW-0064">Aspartyl protease</keyword>
<keyword id="KW-1003">Cell membrane</keyword>
<keyword id="KW-0378">Hydrolase</keyword>
<keyword id="KW-0472">Membrane</keyword>
<keyword id="KW-0645">Protease</keyword>
<keyword id="KW-0812">Transmembrane</keyword>
<keyword id="KW-1133">Transmembrane helix</keyword>
<evidence type="ECO:0000255" key="1">
    <source>
        <dbReference type="HAMAP-Rule" id="MF_00161"/>
    </source>
</evidence>
<accession>A0QHM5</accession>
<proteinExistence type="inferred from homology"/>
<organism>
    <name type="scientific">Mycobacterium avium (strain 104)</name>
    <dbReference type="NCBI Taxonomy" id="243243"/>
    <lineage>
        <taxon>Bacteria</taxon>
        <taxon>Bacillati</taxon>
        <taxon>Actinomycetota</taxon>
        <taxon>Actinomycetes</taxon>
        <taxon>Mycobacteriales</taxon>
        <taxon>Mycobacteriaceae</taxon>
        <taxon>Mycobacterium</taxon>
        <taxon>Mycobacterium avium complex (MAC)</taxon>
    </lineage>
</organism>
<comment type="function">
    <text evidence="1">This protein specifically catalyzes the removal of signal peptides from prolipoproteins.</text>
</comment>
<comment type="catalytic activity">
    <reaction evidence="1">
        <text>Release of signal peptides from bacterial membrane prolipoproteins. Hydrolyzes -Xaa-Yaa-Zaa-|-(S,diacylglyceryl)Cys-, in which Xaa is hydrophobic (preferably Leu), and Yaa (Ala or Ser) and Zaa (Gly or Ala) have small, neutral side chains.</text>
        <dbReference type="EC" id="3.4.23.36"/>
    </reaction>
</comment>
<comment type="pathway">
    <text evidence="1">Protein modification; lipoprotein biosynthesis (signal peptide cleavage).</text>
</comment>
<comment type="subcellular location">
    <subcellularLocation>
        <location evidence="1">Cell membrane</location>
        <topology evidence="1">Multi-pass membrane protein</topology>
    </subcellularLocation>
</comment>
<comment type="similarity">
    <text evidence="1">Belongs to the peptidase A8 family.</text>
</comment>
<gene>
    <name evidence="1" type="primary">lspA</name>
    <name type="ordered locus">MAV_3231</name>
</gene>
<protein>
    <recommendedName>
        <fullName evidence="1">Lipoprotein signal peptidase</fullName>
        <ecNumber evidence="1">3.4.23.36</ecNumber>
    </recommendedName>
    <alternativeName>
        <fullName evidence="1">Prolipoprotein signal peptidase</fullName>
    </alternativeName>
    <alternativeName>
        <fullName evidence="1">Signal peptidase II</fullName>
        <shortName evidence="1">SPase II</shortName>
    </alternativeName>
</protein>
<feature type="chain" id="PRO_0000289400" description="Lipoprotein signal peptidase">
    <location>
        <begin position="1"/>
        <end position="182"/>
    </location>
</feature>
<feature type="transmembrane region" description="Helical" evidence="1">
    <location>
        <begin position="21"/>
        <end position="41"/>
    </location>
</feature>
<feature type="transmembrane region" description="Helical" evidence="1">
    <location>
        <begin position="74"/>
        <end position="94"/>
    </location>
</feature>
<feature type="transmembrane region" description="Helical" evidence="1">
    <location>
        <begin position="98"/>
        <end position="118"/>
    </location>
</feature>
<feature type="transmembrane region" description="Helical" evidence="1">
    <location>
        <begin position="146"/>
        <end position="166"/>
    </location>
</feature>
<feature type="active site" evidence="1">
    <location>
        <position position="134"/>
    </location>
</feature>
<feature type="active site" evidence="1">
    <location>
        <position position="148"/>
    </location>
</feature>
<sequence>MPEEPTGSTAPQDRPPRRLRLLLSVAATVLALDIVTKVLAVKLLPPGQPVPIIGDTVTWTLVRNSGAAFSMATGYTWVLTLIATGVVVGIFWMGRRLVSPWWAVGLGMILGGAMGNLVDRFFRAPGPLRGHVVDFLSVGWWPVFNVADPSVVGGAILLVVLSIFGYDFDTVGRRKKADQSRD</sequence>